<dbReference type="EMBL" id="BX571856">
    <property type="protein sequence ID" value="CAG41242.1"/>
    <property type="molecule type" value="Genomic_DNA"/>
</dbReference>
<dbReference type="RefSeq" id="WP_001251935.1">
    <property type="nucleotide sequence ID" value="NC_002952.2"/>
</dbReference>
<dbReference type="SMR" id="Q6GEQ6"/>
<dbReference type="KEGG" id="sar:SAR2264"/>
<dbReference type="HOGENOM" id="CLU_174851_0_0_9"/>
<dbReference type="Proteomes" id="UP000000596">
    <property type="component" value="Chromosome"/>
</dbReference>
<dbReference type="InterPro" id="IPR055365">
    <property type="entry name" value="PH_SunI-like"/>
</dbReference>
<dbReference type="Pfam" id="PF23491">
    <property type="entry name" value="bPH_8"/>
    <property type="match status" value="1"/>
</dbReference>
<proteinExistence type="inferred from homology"/>
<organism>
    <name type="scientific">Staphylococcus aureus (strain MRSA252)</name>
    <dbReference type="NCBI Taxonomy" id="282458"/>
    <lineage>
        <taxon>Bacteria</taxon>
        <taxon>Bacillati</taxon>
        <taxon>Bacillota</taxon>
        <taxon>Bacilli</taxon>
        <taxon>Bacillales</taxon>
        <taxon>Staphylococcaceae</taxon>
        <taxon>Staphylococcus</taxon>
    </lineage>
</organism>
<evidence type="ECO:0000305" key="1"/>
<reference key="1">
    <citation type="journal article" date="2004" name="Proc. Natl. Acad. Sci. U.S.A.">
        <title>Complete genomes of two clinical Staphylococcus aureus strains: evidence for the rapid evolution of virulence and drug resistance.</title>
        <authorList>
            <person name="Holden M.T.G."/>
            <person name="Feil E.J."/>
            <person name="Lindsay J.A."/>
            <person name="Peacock S.J."/>
            <person name="Day N.P.J."/>
            <person name="Enright M.C."/>
            <person name="Foster T.J."/>
            <person name="Moore C.E."/>
            <person name="Hurst L."/>
            <person name="Atkin R."/>
            <person name="Barron A."/>
            <person name="Bason N."/>
            <person name="Bentley S.D."/>
            <person name="Chillingworth C."/>
            <person name="Chillingworth T."/>
            <person name="Churcher C."/>
            <person name="Clark L."/>
            <person name="Corton C."/>
            <person name="Cronin A."/>
            <person name="Doggett J."/>
            <person name="Dowd L."/>
            <person name="Feltwell T."/>
            <person name="Hance Z."/>
            <person name="Harris B."/>
            <person name="Hauser H."/>
            <person name="Holroyd S."/>
            <person name="Jagels K."/>
            <person name="James K.D."/>
            <person name="Lennard N."/>
            <person name="Line A."/>
            <person name="Mayes R."/>
            <person name="Moule S."/>
            <person name="Mungall K."/>
            <person name="Ormond D."/>
            <person name="Quail M.A."/>
            <person name="Rabbinowitsch E."/>
            <person name="Rutherford K.M."/>
            <person name="Sanders M."/>
            <person name="Sharp S."/>
            <person name="Simmonds M."/>
            <person name="Stevens K."/>
            <person name="Whitehead S."/>
            <person name="Barrell B.G."/>
            <person name="Spratt B.G."/>
            <person name="Parkhill J."/>
        </authorList>
    </citation>
    <scope>NUCLEOTIDE SEQUENCE [LARGE SCALE GENOMIC DNA]</scope>
    <source>
        <strain>MRSA252</strain>
    </source>
</reference>
<comment type="similarity">
    <text evidence="1">Belongs to the UPF0457 family.</text>
</comment>
<accession>Q6GEQ6</accession>
<protein>
    <recommendedName>
        <fullName>UPF0457 protein SAR2264</fullName>
    </recommendedName>
</protein>
<name>Y2264_STAAR</name>
<feature type="chain" id="PRO_0000294499" description="UPF0457 protein SAR2264">
    <location>
        <begin position="1"/>
        <end position="86"/>
    </location>
</feature>
<sequence>MAMTVKKDNNEVRIQWRVADIKIPTSEIKNITQDQDIHAVPKLDSKDVSRIGSTFGKTNRVIIDTEDHEYIIYTQNDQKVYNELTK</sequence>
<gene>
    <name type="ordered locus">SAR2264</name>
</gene>